<dbReference type="EMBL" id="AE014299">
    <property type="protein sequence ID" value="AAN56528.1"/>
    <property type="molecule type" value="Genomic_DNA"/>
</dbReference>
<dbReference type="RefSeq" id="NP_719084.1">
    <property type="nucleotide sequence ID" value="NC_004347.2"/>
</dbReference>
<dbReference type="RefSeq" id="WP_011073368.1">
    <property type="nucleotide sequence ID" value="NZ_CP053946.1"/>
</dbReference>
<dbReference type="SMR" id="Q8EBH9"/>
<dbReference type="STRING" id="211586.SO_3537"/>
<dbReference type="PaxDb" id="211586-SO_3537"/>
<dbReference type="KEGG" id="son:SO_3537"/>
<dbReference type="PATRIC" id="fig|211586.12.peg.3431"/>
<dbReference type="eggNOG" id="COG0268">
    <property type="taxonomic scope" value="Bacteria"/>
</dbReference>
<dbReference type="HOGENOM" id="CLU_160655_4_0_6"/>
<dbReference type="OrthoDB" id="9807974at2"/>
<dbReference type="PhylomeDB" id="Q8EBH9"/>
<dbReference type="BioCyc" id="SONE211586:G1GMP-3297-MONOMER"/>
<dbReference type="Proteomes" id="UP000008186">
    <property type="component" value="Chromosome"/>
</dbReference>
<dbReference type="GO" id="GO:0005829">
    <property type="term" value="C:cytosol"/>
    <property type="evidence" value="ECO:0000318"/>
    <property type="project" value="GO_Central"/>
</dbReference>
<dbReference type="GO" id="GO:0015935">
    <property type="term" value="C:small ribosomal subunit"/>
    <property type="evidence" value="ECO:0000318"/>
    <property type="project" value="GO_Central"/>
</dbReference>
<dbReference type="GO" id="GO:0070181">
    <property type="term" value="F:small ribosomal subunit rRNA binding"/>
    <property type="evidence" value="ECO:0000318"/>
    <property type="project" value="GO_Central"/>
</dbReference>
<dbReference type="GO" id="GO:0003735">
    <property type="term" value="F:structural constituent of ribosome"/>
    <property type="evidence" value="ECO:0007669"/>
    <property type="project" value="InterPro"/>
</dbReference>
<dbReference type="GO" id="GO:0006412">
    <property type="term" value="P:translation"/>
    <property type="evidence" value="ECO:0007669"/>
    <property type="project" value="UniProtKB-UniRule"/>
</dbReference>
<dbReference type="FunFam" id="1.20.58.110:FF:000001">
    <property type="entry name" value="30S ribosomal protein S20"/>
    <property type="match status" value="1"/>
</dbReference>
<dbReference type="Gene3D" id="1.20.58.110">
    <property type="entry name" value="Ribosomal protein S20"/>
    <property type="match status" value="1"/>
</dbReference>
<dbReference type="HAMAP" id="MF_00500">
    <property type="entry name" value="Ribosomal_bS20"/>
    <property type="match status" value="1"/>
</dbReference>
<dbReference type="InterPro" id="IPR002583">
    <property type="entry name" value="Ribosomal_bS20"/>
</dbReference>
<dbReference type="InterPro" id="IPR036510">
    <property type="entry name" value="Ribosomal_bS20_sf"/>
</dbReference>
<dbReference type="NCBIfam" id="TIGR00029">
    <property type="entry name" value="S20"/>
    <property type="match status" value="1"/>
</dbReference>
<dbReference type="PANTHER" id="PTHR33398">
    <property type="entry name" value="30S RIBOSOMAL PROTEIN S20"/>
    <property type="match status" value="1"/>
</dbReference>
<dbReference type="PANTHER" id="PTHR33398:SF1">
    <property type="entry name" value="SMALL RIBOSOMAL SUBUNIT PROTEIN BS20C"/>
    <property type="match status" value="1"/>
</dbReference>
<dbReference type="Pfam" id="PF01649">
    <property type="entry name" value="Ribosomal_S20p"/>
    <property type="match status" value="1"/>
</dbReference>
<dbReference type="SUPFAM" id="SSF46992">
    <property type="entry name" value="Ribosomal protein S20"/>
    <property type="match status" value="1"/>
</dbReference>
<reference key="1">
    <citation type="journal article" date="2002" name="Nat. Biotechnol.">
        <title>Genome sequence of the dissimilatory metal ion-reducing bacterium Shewanella oneidensis.</title>
        <authorList>
            <person name="Heidelberg J.F."/>
            <person name="Paulsen I.T."/>
            <person name="Nelson K.E."/>
            <person name="Gaidos E.J."/>
            <person name="Nelson W.C."/>
            <person name="Read T.D."/>
            <person name="Eisen J.A."/>
            <person name="Seshadri R."/>
            <person name="Ward N.L."/>
            <person name="Methe B.A."/>
            <person name="Clayton R.A."/>
            <person name="Meyer T."/>
            <person name="Tsapin A."/>
            <person name="Scott J."/>
            <person name="Beanan M.J."/>
            <person name="Brinkac L.M."/>
            <person name="Daugherty S.C."/>
            <person name="DeBoy R.T."/>
            <person name="Dodson R.J."/>
            <person name="Durkin A.S."/>
            <person name="Haft D.H."/>
            <person name="Kolonay J.F."/>
            <person name="Madupu R."/>
            <person name="Peterson J.D."/>
            <person name="Umayam L.A."/>
            <person name="White O."/>
            <person name="Wolf A.M."/>
            <person name="Vamathevan J.J."/>
            <person name="Weidman J.F."/>
            <person name="Impraim M."/>
            <person name="Lee K."/>
            <person name="Berry K.J."/>
            <person name="Lee C."/>
            <person name="Mueller J."/>
            <person name="Khouri H.M."/>
            <person name="Gill J."/>
            <person name="Utterback T.R."/>
            <person name="McDonald L.A."/>
            <person name="Feldblyum T.V."/>
            <person name="Smith H.O."/>
            <person name="Venter J.C."/>
            <person name="Nealson K.H."/>
            <person name="Fraser C.M."/>
        </authorList>
    </citation>
    <scope>NUCLEOTIDE SEQUENCE [LARGE SCALE GENOMIC DNA]</scope>
    <source>
        <strain>ATCC 700550 / JCM 31522 / CIP 106686 / LMG 19005 / NCIMB 14063 / MR-1</strain>
    </source>
</reference>
<accession>Q8EBH9</accession>
<organism>
    <name type="scientific">Shewanella oneidensis (strain ATCC 700550 / JCM 31522 / CIP 106686 / LMG 19005 / NCIMB 14063 / MR-1)</name>
    <dbReference type="NCBI Taxonomy" id="211586"/>
    <lineage>
        <taxon>Bacteria</taxon>
        <taxon>Pseudomonadati</taxon>
        <taxon>Pseudomonadota</taxon>
        <taxon>Gammaproteobacteria</taxon>
        <taxon>Alteromonadales</taxon>
        <taxon>Shewanellaceae</taxon>
        <taxon>Shewanella</taxon>
    </lineage>
</organism>
<comment type="function">
    <text evidence="1">Binds directly to 16S ribosomal RNA.</text>
</comment>
<comment type="similarity">
    <text evidence="1">Belongs to the bacterial ribosomal protein bS20 family.</text>
</comment>
<name>RS20_SHEON</name>
<evidence type="ECO:0000255" key="1">
    <source>
        <dbReference type="HAMAP-Rule" id="MF_00500"/>
    </source>
</evidence>
<evidence type="ECO:0000256" key="2">
    <source>
        <dbReference type="SAM" id="MobiDB-lite"/>
    </source>
</evidence>
<evidence type="ECO:0000305" key="3"/>
<protein>
    <recommendedName>
        <fullName evidence="1">Small ribosomal subunit protein bS20</fullName>
    </recommendedName>
    <alternativeName>
        <fullName evidence="3">30S ribosomal protein S20</fullName>
    </alternativeName>
</protein>
<keyword id="KW-1185">Reference proteome</keyword>
<keyword id="KW-0687">Ribonucleoprotein</keyword>
<keyword id="KW-0689">Ribosomal protein</keyword>
<keyword id="KW-0694">RNA-binding</keyword>
<keyword id="KW-0699">rRNA-binding</keyword>
<sequence length="88" mass="9758">MANSKSAKKRALQSEKRRQHNASRRSMLRTYVKKVIAAIRAGDHKTATEAFAAAQPIVDRMATKGLIHKNKAARHKARLNAKIKALVA</sequence>
<proteinExistence type="inferred from homology"/>
<gene>
    <name evidence="1" type="primary">rpsT</name>
    <name type="ordered locus">SO_3537</name>
</gene>
<feature type="chain" id="PRO_0000168028" description="Small ribosomal subunit protein bS20">
    <location>
        <begin position="1"/>
        <end position="88"/>
    </location>
</feature>
<feature type="region of interest" description="Disordered" evidence="2">
    <location>
        <begin position="1"/>
        <end position="27"/>
    </location>
</feature>